<dbReference type="EC" id="3.4.21.-"/>
<dbReference type="EMBL" id="CP000730">
    <property type="protein sequence ID" value="ABX29806.1"/>
    <property type="molecule type" value="Genomic_DNA"/>
</dbReference>
<dbReference type="RefSeq" id="WP_001038704.1">
    <property type="nucleotide sequence ID" value="NC_010079.1"/>
</dbReference>
<dbReference type="SMR" id="A8Z4N6"/>
<dbReference type="MEROPS" id="S01.526"/>
<dbReference type="KEGG" id="sax:USA300HOU_1803"/>
<dbReference type="HOGENOM" id="CLU_073589_2_0_9"/>
<dbReference type="GO" id="GO:0005576">
    <property type="term" value="C:extracellular region"/>
    <property type="evidence" value="ECO:0007669"/>
    <property type="project" value="UniProtKB-SubCell"/>
</dbReference>
<dbReference type="GO" id="GO:0008236">
    <property type="term" value="F:serine-type peptidase activity"/>
    <property type="evidence" value="ECO:0007669"/>
    <property type="project" value="UniProtKB-KW"/>
</dbReference>
<dbReference type="GO" id="GO:0006508">
    <property type="term" value="P:proteolysis"/>
    <property type="evidence" value="ECO:0007669"/>
    <property type="project" value="UniProtKB-KW"/>
</dbReference>
<dbReference type="Gene3D" id="2.40.10.10">
    <property type="entry name" value="Trypsin-like serine proteases"/>
    <property type="match status" value="2"/>
</dbReference>
<dbReference type="InterPro" id="IPR009003">
    <property type="entry name" value="Peptidase_S1_PA"/>
</dbReference>
<dbReference type="InterPro" id="IPR043504">
    <property type="entry name" value="Peptidase_S1_PA_chymotrypsin"/>
</dbReference>
<dbReference type="InterPro" id="IPR008256">
    <property type="entry name" value="Peptidase_S1B"/>
</dbReference>
<dbReference type="InterPro" id="IPR028301">
    <property type="entry name" value="V8_his_AS"/>
</dbReference>
<dbReference type="PANTHER" id="PTHR43019:SF23">
    <property type="entry name" value="PROTEASE DO-LIKE 5, CHLOROPLASTIC"/>
    <property type="match status" value="1"/>
</dbReference>
<dbReference type="PANTHER" id="PTHR43019">
    <property type="entry name" value="SERINE ENDOPROTEASE DEGS"/>
    <property type="match status" value="1"/>
</dbReference>
<dbReference type="Pfam" id="PF13365">
    <property type="entry name" value="Trypsin_2"/>
    <property type="match status" value="1"/>
</dbReference>
<dbReference type="PRINTS" id="PR00839">
    <property type="entry name" value="V8PROTEASE"/>
</dbReference>
<dbReference type="SUPFAM" id="SSF50494">
    <property type="entry name" value="Trypsin-like serine proteases"/>
    <property type="match status" value="1"/>
</dbReference>
<dbReference type="PROSITE" id="PS00672">
    <property type="entry name" value="V8_HIS"/>
    <property type="match status" value="1"/>
</dbReference>
<organism>
    <name type="scientific">Staphylococcus aureus (strain USA300 / TCH1516)</name>
    <dbReference type="NCBI Taxonomy" id="451516"/>
    <lineage>
        <taxon>Bacteria</taxon>
        <taxon>Bacillati</taxon>
        <taxon>Bacillota</taxon>
        <taxon>Bacilli</taxon>
        <taxon>Bacillales</taxon>
        <taxon>Staphylococcaceae</taxon>
        <taxon>Staphylococcus</taxon>
    </lineage>
</organism>
<protein>
    <recommendedName>
        <fullName>Serine protease SplD</fullName>
        <ecNumber>3.4.21.-</ecNumber>
    </recommendedName>
</protein>
<comment type="subcellular location">
    <subcellularLocation>
        <location evidence="1">Secreted</location>
    </subcellularLocation>
</comment>
<comment type="similarity">
    <text evidence="3">Belongs to the peptidase S1B family.</text>
</comment>
<keyword id="KW-0378">Hydrolase</keyword>
<keyword id="KW-0645">Protease</keyword>
<keyword id="KW-0964">Secreted</keyword>
<keyword id="KW-0720">Serine protease</keyword>
<keyword id="KW-0732">Signal</keyword>
<reference key="1">
    <citation type="journal article" date="2007" name="BMC Microbiol.">
        <title>Subtle genetic changes enhance virulence of methicillin resistant and sensitive Staphylococcus aureus.</title>
        <authorList>
            <person name="Highlander S.K."/>
            <person name="Hulten K.G."/>
            <person name="Qin X."/>
            <person name="Jiang H."/>
            <person name="Yerrapragada S."/>
            <person name="Mason E.O. Jr."/>
            <person name="Shang Y."/>
            <person name="Williams T.M."/>
            <person name="Fortunov R.M."/>
            <person name="Liu Y."/>
            <person name="Igboeli O."/>
            <person name="Petrosino J."/>
            <person name="Tirumalai M."/>
            <person name="Uzman A."/>
            <person name="Fox G.E."/>
            <person name="Cardenas A.M."/>
            <person name="Muzny D.M."/>
            <person name="Hemphill L."/>
            <person name="Ding Y."/>
            <person name="Dugan S."/>
            <person name="Blyth P.R."/>
            <person name="Buhay C.J."/>
            <person name="Dinh H.H."/>
            <person name="Hawes A.C."/>
            <person name="Holder M."/>
            <person name="Kovar C.L."/>
            <person name="Lee S.L."/>
            <person name="Liu W."/>
            <person name="Nazareth L.V."/>
            <person name="Wang Q."/>
            <person name="Zhou J."/>
            <person name="Kaplan S.L."/>
            <person name="Weinstock G.M."/>
        </authorList>
    </citation>
    <scope>NUCLEOTIDE SEQUENCE [LARGE SCALE GENOMIC DNA]</scope>
    <source>
        <strain>USA300 / TCH1516</strain>
    </source>
</reference>
<name>SPLD_STAAT</name>
<gene>
    <name type="primary">splD</name>
    <name type="ordered locus">USA300HOU_1803</name>
</gene>
<accession>A8Z4N6</accession>
<feature type="signal peptide" evidence="2">
    <location>
        <begin position="1"/>
        <end position="36"/>
    </location>
</feature>
<feature type="chain" id="PRO_0000359570" description="Serine protease SplD">
    <location>
        <begin position="37"/>
        <end position="239"/>
    </location>
</feature>
<feature type="active site" description="Charge relay system" evidence="1">
    <location>
        <position position="75"/>
    </location>
</feature>
<feature type="active site" description="Charge relay system" evidence="1">
    <location>
        <position position="114"/>
    </location>
</feature>
<feature type="active site" description="Charge relay system" evidence="1">
    <location>
        <position position="192"/>
    </location>
</feature>
<sequence>MNKNIIIKSIAALTILTSITGVGTTVVDGIQQTAKAENSVKLITNTNVAPYSGVTWMGAGTGFVVGNHTIITNKHVTYHMKVGDEIKAHPNGFYNNGGGLYKVTKIVDYPGKEDIAVVQVEEKSTQPKGRKFKDFTSKFNIASEAKENEPISVIGYPNPNGNKLQMYESTGKVLSVNGNIVTSDAVVQPGSSGSPILNSKREAIGVMYASDKPTGESTRSFAVYFSPEIKKFIADNLDK</sequence>
<evidence type="ECO:0000250" key="1"/>
<evidence type="ECO:0000255" key="2"/>
<evidence type="ECO:0000305" key="3"/>
<proteinExistence type="inferred from homology"/>